<accession>Q7MYU7</accession>
<sequence>MRHYEIVFMVHPDQSEQVPGMIERYSATITNAQGQIHRLEDWGRRQLAYPINKLHKAHYVLMNVEAPQEVIDELETNFRFNDAVIRSMIMRVKHAVTEASPMVKAKDERRSRDYSLEDANMDAEEAGDSEE</sequence>
<organism>
    <name type="scientific">Photorhabdus laumondii subsp. laumondii (strain DSM 15139 / CIP 105565 / TT01)</name>
    <name type="common">Photorhabdus luminescens subsp. laumondii</name>
    <dbReference type="NCBI Taxonomy" id="243265"/>
    <lineage>
        <taxon>Bacteria</taxon>
        <taxon>Pseudomonadati</taxon>
        <taxon>Pseudomonadota</taxon>
        <taxon>Gammaproteobacteria</taxon>
        <taxon>Enterobacterales</taxon>
        <taxon>Morganellaceae</taxon>
        <taxon>Photorhabdus</taxon>
    </lineage>
</organism>
<keyword id="KW-1185">Reference proteome</keyword>
<keyword id="KW-0687">Ribonucleoprotein</keyword>
<keyword id="KW-0689">Ribosomal protein</keyword>
<keyword id="KW-0694">RNA-binding</keyword>
<keyword id="KW-0699">rRNA-binding</keyword>
<evidence type="ECO:0000255" key="1">
    <source>
        <dbReference type="HAMAP-Rule" id="MF_00360"/>
    </source>
</evidence>
<evidence type="ECO:0000256" key="2">
    <source>
        <dbReference type="SAM" id="MobiDB-lite"/>
    </source>
</evidence>
<evidence type="ECO:0000305" key="3"/>
<feature type="chain" id="PRO_0000176812" description="Small ribosomal subunit protein bS6">
    <location>
        <begin position="1"/>
        <end position="131"/>
    </location>
</feature>
<feature type="region of interest" description="Disordered" evidence="2">
    <location>
        <begin position="100"/>
        <end position="131"/>
    </location>
</feature>
<feature type="compositionally biased region" description="Basic and acidic residues" evidence="2">
    <location>
        <begin position="104"/>
        <end position="115"/>
    </location>
</feature>
<feature type="compositionally biased region" description="Acidic residues" evidence="2">
    <location>
        <begin position="119"/>
        <end position="131"/>
    </location>
</feature>
<proteinExistence type="inferred from homology"/>
<reference key="1">
    <citation type="journal article" date="2003" name="Nat. Biotechnol.">
        <title>The genome sequence of the entomopathogenic bacterium Photorhabdus luminescens.</title>
        <authorList>
            <person name="Duchaud E."/>
            <person name="Rusniok C."/>
            <person name="Frangeul L."/>
            <person name="Buchrieser C."/>
            <person name="Givaudan A."/>
            <person name="Taourit S."/>
            <person name="Bocs S."/>
            <person name="Boursaux-Eude C."/>
            <person name="Chandler M."/>
            <person name="Charles J.-F."/>
            <person name="Dassa E."/>
            <person name="Derose R."/>
            <person name="Derzelle S."/>
            <person name="Freyssinet G."/>
            <person name="Gaudriault S."/>
            <person name="Medigue C."/>
            <person name="Lanois A."/>
            <person name="Powell K."/>
            <person name="Siguier P."/>
            <person name="Vincent R."/>
            <person name="Wingate V."/>
            <person name="Zouine M."/>
            <person name="Glaser P."/>
            <person name="Boemare N."/>
            <person name="Danchin A."/>
            <person name="Kunst F."/>
        </authorList>
    </citation>
    <scope>NUCLEOTIDE SEQUENCE [LARGE SCALE GENOMIC DNA]</scope>
    <source>
        <strain>DSM 15139 / CIP 105565 / TT01</strain>
    </source>
</reference>
<dbReference type="EMBL" id="BX571874">
    <property type="protein sequence ID" value="CAE16945.1"/>
    <property type="molecule type" value="Genomic_DNA"/>
</dbReference>
<dbReference type="RefSeq" id="WP_011148646.1">
    <property type="nucleotide sequence ID" value="NC_005126.1"/>
</dbReference>
<dbReference type="SMR" id="Q7MYU7"/>
<dbReference type="STRING" id="243265.plu4573"/>
<dbReference type="GeneID" id="88805035"/>
<dbReference type="KEGG" id="plu:plu4573"/>
<dbReference type="eggNOG" id="COG0360">
    <property type="taxonomic scope" value="Bacteria"/>
</dbReference>
<dbReference type="HOGENOM" id="CLU_113441_6_1_6"/>
<dbReference type="OrthoDB" id="9812702at2"/>
<dbReference type="Proteomes" id="UP000002514">
    <property type="component" value="Chromosome"/>
</dbReference>
<dbReference type="GO" id="GO:0022627">
    <property type="term" value="C:cytosolic small ribosomal subunit"/>
    <property type="evidence" value="ECO:0007669"/>
    <property type="project" value="TreeGrafter"/>
</dbReference>
<dbReference type="GO" id="GO:0070181">
    <property type="term" value="F:small ribosomal subunit rRNA binding"/>
    <property type="evidence" value="ECO:0007669"/>
    <property type="project" value="TreeGrafter"/>
</dbReference>
<dbReference type="GO" id="GO:0003735">
    <property type="term" value="F:structural constituent of ribosome"/>
    <property type="evidence" value="ECO:0007669"/>
    <property type="project" value="InterPro"/>
</dbReference>
<dbReference type="GO" id="GO:0006412">
    <property type="term" value="P:translation"/>
    <property type="evidence" value="ECO:0007669"/>
    <property type="project" value="UniProtKB-UniRule"/>
</dbReference>
<dbReference type="CDD" id="cd00473">
    <property type="entry name" value="bS6"/>
    <property type="match status" value="1"/>
</dbReference>
<dbReference type="FunFam" id="3.30.70.60:FF:000003">
    <property type="entry name" value="30S ribosomal protein S6"/>
    <property type="match status" value="1"/>
</dbReference>
<dbReference type="Gene3D" id="3.30.70.60">
    <property type="match status" value="1"/>
</dbReference>
<dbReference type="HAMAP" id="MF_00360">
    <property type="entry name" value="Ribosomal_bS6"/>
    <property type="match status" value="1"/>
</dbReference>
<dbReference type="InterPro" id="IPR000529">
    <property type="entry name" value="Ribosomal_bS6"/>
</dbReference>
<dbReference type="InterPro" id="IPR020815">
    <property type="entry name" value="Ribosomal_bS6_CS"/>
</dbReference>
<dbReference type="InterPro" id="IPR035980">
    <property type="entry name" value="Ribosomal_bS6_sf"/>
</dbReference>
<dbReference type="InterPro" id="IPR020814">
    <property type="entry name" value="Ribosomal_S6_plastid/chlpt"/>
</dbReference>
<dbReference type="InterPro" id="IPR014717">
    <property type="entry name" value="Transl_elong_EF1B/ribsomal_bS6"/>
</dbReference>
<dbReference type="NCBIfam" id="TIGR00166">
    <property type="entry name" value="S6"/>
    <property type="match status" value="1"/>
</dbReference>
<dbReference type="PANTHER" id="PTHR21011">
    <property type="entry name" value="MITOCHONDRIAL 28S RIBOSOMAL PROTEIN S6"/>
    <property type="match status" value="1"/>
</dbReference>
<dbReference type="PANTHER" id="PTHR21011:SF1">
    <property type="entry name" value="SMALL RIBOSOMAL SUBUNIT PROTEIN BS6M"/>
    <property type="match status" value="1"/>
</dbReference>
<dbReference type="Pfam" id="PF01250">
    <property type="entry name" value="Ribosomal_S6"/>
    <property type="match status" value="1"/>
</dbReference>
<dbReference type="SUPFAM" id="SSF54995">
    <property type="entry name" value="Ribosomal protein S6"/>
    <property type="match status" value="1"/>
</dbReference>
<dbReference type="PROSITE" id="PS01048">
    <property type="entry name" value="RIBOSOMAL_S6"/>
    <property type="match status" value="1"/>
</dbReference>
<gene>
    <name evidence="1" type="primary">rpsF</name>
    <name type="ordered locus">plu4573</name>
</gene>
<comment type="function">
    <text evidence="1">Binds together with bS18 to 16S ribosomal RNA.</text>
</comment>
<comment type="similarity">
    <text evidence="1">Belongs to the bacterial ribosomal protein bS6 family.</text>
</comment>
<name>RS6_PHOLL</name>
<protein>
    <recommendedName>
        <fullName evidence="1">Small ribosomal subunit protein bS6</fullName>
    </recommendedName>
    <alternativeName>
        <fullName evidence="3">30S ribosomal protein S6</fullName>
    </alternativeName>
</protein>